<sequence length="101" mass="12060">MDKSKRTFLKSKRSFRRRLPPIQSGDRIDYKNMSLISRFISEQGKILSRRVNRLTLKQQRLITIAIKQARILSLLPFLNNEKQFERTESTTRTPSLRARKR</sequence>
<gene>
    <name evidence="1" type="primary">rps18</name>
</gene>
<organism>
    <name type="scientific">Lactuca sativa</name>
    <name type="common">Garden lettuce</name>
    <dbReference type="NCBI Taxonomy" id="4236"/>
    <lineage>
        <taxon>Eukaryota</taxon>
        <taxon>Viridiplantae</taxon>
        <taxon>Streptophyta</taxon>
        <taxon>Embryophyta</taxon>
        <taxon>Tracheophyta</taxon>
        <taxon>Spermatophyta</taxon>
        <taxon>Magnoliopsida</taxon>
        <taxon>eudicotyledons</taxon>
        <taxon>Gunneridae</taxon>
        <taxon>Pentapetalae</taxon>
        <taxon>asterids</taxon>
        <taxon>campanulids</taxon>
        <taxon>Asterales</taxon>
        <taxon>Asteraceae</taxon>
        <taxon>Cichorioideae</taxon>
        <taxon>Cichorieae</taxon>
        <taxon>Lactucinae</taxon>
        <taxon>Lactuca</taxon>
    </lineage>
</organism>
<feature type="chain" id="PRO_0000276874" description="Small ribosomal subunit protein bS18c">
    <location>
        <begin position="1"/>
        <end position="101"/>
    </location>
</feature>
<keyword id="KW-0150">Chloroplast</keyword>
<keyword id="KW-0934">Plastid</keyword>
<keyword id="KW-0687">Ribonucleoprotein</keyword>
<keyword id="KW-0689">Ribosomal protein</keyword>
<keyword id="KW-0694">RNA-binding</keyword>
<keyword id="KW-0699">rRNA-binding</keyword>
<reference key="1">
    <citation type="journal article" date="2006" name="Transgenic Res.">
        <title>Efficient and stable transformation of Lactuca sativa L. cv. Cisco (lettuce) plastids.</title>
        <authorList>
            <person name="Kanamoto H."/>
            <person name="Yamashita A."/>
            <person name="Asao H."/>
            <person name="Okumura S."/>
            <person name="Takase H."/>
            <person name="Hattori M."/>
            <person name="Yokota A."/>
            <person name="Tomizawa K."/>
        </authorList>
    </citation>
    <scope>NUCLEOTIDE SEQUENCE [LARGE SCALE GENOMIC DNA]</scope>
    <source>
        <strain>cv. Cisco</strain>
    </source>
</reference>
<reference key="2">
    <citation type="submission" date="2006-01" db="EMBL/GenBank/DDBJ databases">
        <title>A comparison of the first two published chloroplast genomes in Asteraceae: Lactuca and Helianthus.</title>
        <authorList>
            <person name="Timme R.E."/>
            <person name="Kuehl J.V."/>
            <person name="Boore J.L."/>
            <person name="Jansen R.K."/>
        </authorList>
    </citation>
    <scope>NUCLEOTIDE SEQUENCE [LARGE SCALE GENOMIC DNA]</scope>
    <source>
        <strain>cv. Salinas</strain>
    </source>
</reference>
<accession>Q332V6</accession>
<dbReference type="EMBL" id="AP007232">
    <property type="protein sequence ID" value="BAE47616.1"/>
    <property type="molecule type" value="Genomic_DNA"/>
</dbReference>
<dbReference type="EMBL" id="DQ383816">
    <property type="protein sequence ID" value="ABD47255.1"/>
    <property type="molecule type" value="Genomic_DNA"/>
</dbReference>
<dbReference type="RefSeq" id="YP_398351.1">
    <property type="nucleotide sequence ID" value="NC_007578.1"/>
</dbReference>
<dbReference type="SMR" id="Q332V6"/>
<dbReference type="GeneID" id="3772820"/>
<dbReference type="KEGG" id="lsv:3772820"/>
<dbReference type="OrthoDB" id="21463at2759"/>
<dbReference type="GO" id="GO:0009507">
    <property type="term" value="C:chloroplast"/>
    <property type="evidence" value="ECO:0007669"/>
    <property type="project" value="UniProtKB-SubCell"/>
</dbReference>
<dbReference type="GO" id="GO:1990904">
    <property type="term" value="C:ribonucleoprotein complex"/>
    <property type="evidence" value="ECO:0007669"/>
    <property type="project" value="UniProtKB-KW"/>
</dbReference>
<dbReference type="GO" id="GO:0005840">
    <property type="term" value="C:ribosome"/>
    <property type="evidence" value="ECO:0007669"/>
    <property type="project" value="UniProtKB-KW"/>
</dbReference>
<dbReference type="GO" id="GO:0019843">
    <property type="term" value="F:rRNA binding"/>
    <property type="evidence" value="ECO:0007669"/>
    <property type="project" value="UniProtKB-UniRule"/>
</dbReference>
<dbReference type="GO" id="GO:0003735">
    <property type="term" value="F:structural constituent of ribosome"/>
    <property type="evidence" value="ECO:0007669"/>
    <property type="project" value="InterPro"/>
</dbReference>
<dbReference type="GO" id="GO:0006412">
    <property type="term" value="P:translation"/>
    <property type="evidence" value="ECO:0007669"/>
    <property type="project" value="UniProtKB-UniRule"/>
</dbReference>
<dbReference type="FunFam" id="4.10.640.10:FF:000002">
    <property type="entry name" value="30S ribosomal protein S18, chloroplastic"/>
    <property type="match status" value="1"/>
</dbReference>
<dbReference type="Gene3D" id="4.10.640.10">
    <property type="entry name" value="Ribosomal protein S18"/>
    <property type="match status" value="1"/>
</dbReference>
<dbReference type="HAMAP" id="MF_00270">
    <property type="entry name" value="Ribosomal_bS18"/>
    <property type="match status" value="1"/>
</dbReference>
<dbReference type="InterPro" id="IPR001648">
    <property type="entry name" value="Ribosomal_bS18"/>
</dbReference>
<dbReference type="InterPro" id="IPR018275">
    <property type="entry name" value="Ribosomal_bS18_CS"/>
</dbReference>
<dbReference type="InterPro" id="IPR036870">
    <property type="entry name" value="Ribosomal_bS18_sf"/>
</dbReference>
<dbReference type="NCBIfam" id="TIGR00165">
    <property type="entry name" value="S18"/>
    <property type="match status" value="1"/>
</dbReference>
<dbReference type="PANTHER" id="PTHR13479">
    <property type="entry name" value="30S RIBOSOMAL PROTEIN S18"/>
    <property type="match status" value="1"/>
</dbReference>
<dbReference type="PANTHER" id="PTHR13479:SF40">
    <property type="entry name" value="SMALL RIBOSOMAL SUBUNIT PROTEIN BS18M"/>
    <property type="match status" value="1"/>
</dbReference>
<dbReference type="Pfam" id="PF01084">
    <property type="entry name" value="Ribosomal_S18"/>
    <property type="match status" value="1"/>
</dbReference>
<dbReference type="PRINTS" id="PR00974">
    <property type="entry name" value="RIBOSOMALS18"/>
</dbReference>
<dbReference type="SUPFAM" id="SSF46911">
    <property type="entry name" value="Ribosomal protein S18"/>
    <property type="match status" value="1"/>
</dbReference>
<dbReference type="PROSITE" id="PS00057">
    <property type="entry name" value="RIBOSOMAL_S18"/>
    <property type="match status" value="1"/>
</dbReference>
<protein>
    <recommendedName>
        <fullName evidence="1">Small ribosomal subunit protein bS18c</fullName>
    </recommendedName>
    <alternativeName>
        <fullName evidence="2">30S ribosomal protein S18, chloroplastic</fullName>
    </alternativeName>
</protein>
<comment type="subunit">
    <text>Part of the 30S ribosomal subunit.</text>
</comment>
<comment type="subcellular location">
    <subcellularLocation>
        <location>Plastid</location>
        <location>Chloroplast</location>
    </subcellularLocation>
</comment>
<comment type="similarity">
    <text evidence="1">Belongs to the bacterial ribosomal protein bS18 family.</text>
</comment>
<geneLocation type="chloroplast"/>
<proteinExistence type="inferred from homology"/>
<name>RR18_LACSA</name>
<evidence type="ECO:0000255" key="1">
    <source>
        <dbReference type="HAMAP-Rule" id="MF_00270"/>
    </source>
</evidence>
<evidence type="ECO:0000305" key="2"/>